<sequence>MKNKFIFFTLNLLLAVLGAVLFALSHPNYLNLNGFPFFAYIALIPFFLLLKRTKLKFSFLWGAFSGALSYFIFNFWIIFFHPLAIYIIIAKYCILYSVLFFVLKIIDSYFSRYSFIFQTIAWVAFEYLNTLGFLGYSYGIMGYTQWNFPILIRVSSIFGVWGISFLLVFFSACSASFLFEFYKEKDIKNVYQRYKLPMMIWVGTFFAFILYGAFTKIDLSEAQRARIALVQPNRDPWLGNLEVYRNNYEELKNLSEKALKNFPDIELVVWPETAFIPMIRWHYKYTSTYNPNSLLVRELLHFLDNQKVPFLIGNDDGVLDEKFSDNNFDNLEDKRLDYNAALLFIPKKNVSPPEPQTYRKMHLVPFTEHFPYQKLFPRFYEFLKENDTHFWEKGKEANLLEFNNFKIGTPICFEDTFGYISKAFSKKGANIIINLTNDAWANSAVSQYQHLSMAVFRAVENRLPVLRATSSGQTAFIDQNGNIQEMLPPFIKDILVADVTVLTEGHKTVYSYLGDFFGVLCTIVLILNLCFIIINKFIKRSEVK</sequence>
<protein>
    <recommendedName>
        <fullName evidence="1">Apolipoprotein N-acyltransferase 1</fullName>
        <shortName evidence="1">ALP N-acyltransferase 1</shortName>
        <ecNumber evidence="1">2.3.1.269</ecNumber>
    </recommendedName>
</protein>
<organism>
    <name type="scientific">Treponema denticola (strain ATCC 35405 / DSM 14222 / CIP 103919 / JCM 8153 / KCTC 15104)</name>
    <dbReference type="NCBI Taxonomy" id="243275"/>
    <lineage>
        <taxon>Bacteria</taxon>
        <taxon>Pseudomonadati</taxon>
        <taxon>Spirochaetota</taxon>
        <taxon>Spirochaetia</taxon>
        <taxon>Spirochaetales</taxon>
        <taxon>Treponemataceae</taxon>
        <taxon>Treponema</taxon>
    </lineage>
</organism>
<feature type="chain" id="PRO_0000178103" description="Apolipoprotein N-acyltransferase 1">
    <location>
        <begin position="1"/>
        <end position="544"/>
    </location>
</feature>
<feature type="transmembrane region" description="Helical" evidence="1">
    <location>
        <begin position="30"/>
        <end position="50"/>
    </location>
</feature>
<feature type="transmembrane region" description="Helical" evidence="1">
    <location>
        <begin position="57"/>
        <end position="79"/>
    </location>
</feature>
<feature type="transmembrane region" description="Helical" evidence="1">
    <location>
        <begin position="91"/>
        <end position="111"/>
    </location>
</feature>
<feature type="transmembrane region" description="Helical" evidence="1">
    <location>
        <begin position="115"/>
        <end position="135"/>
    </location>
</feature>
<feature type="transmembrane region" description="Helical" evidence="1">
    <location>
        <begin position="157"/>
        <end position="177"/>
    </location>
</feature>
<feature type="transmembrane region" description="Helical" evidence="1">
    <location>
        <begin position="197"/>
        <end position="217"/>
    </location>
</feature>
<feature type="transmembrane region" description="Helical" evidence="1">
    <location>
        <begin position="514"/>
        <end position="534"/>
    </location>
</feature>
<feature type="domain" description="CN hydrolase" evidence="1">
    <location>
        <begin position="225"/>
        <end position="501"/>
    </location>
</feature>
<feature type="active site" description="Proton acceptor" evidence="1">
    <location>
        <position position="272"/>
    </location>
</feature>
<feature type="active site" evidence="1">
    <location>
        <position position="360"/>
    </location>
</feature>
<feature type="active site" description="Nucleophile" evidence="1">
    <location>
        <position position="412"/>
    </location>
</feature>
<dbReference type="EC" id="2.3.1.269" evidence="1"/>
<dbReference type="EMBL" id="AE017226">
    <property type="protein sequence ID" value="AAS12223.1"/>
    <property type="molecule type" value="Genomic_DNA"/>
</dbReference>
<dbReference type="RefSeq" id="NP_972312.1">
    <property type="nucleotide sequence ID" value="NC_002967.9"/>
</dbReference>
<dbReference type="SMR" id="P61037"/>
<dbReference type="STRING" id="243275.TDE_1708"/>
<dbReference type="PaxDb" id="243275-TDE_1708"/>
<dbReference type="GeneID" id="2740880"/>
<dbReference type="KEGG" id="tde:TDE_1708"/>
<dbReference type="PATRIC" id="fig|243275.7.peg.1633"/>
<dbReference type="eggNOG" id="COG0815">
    <property type="taxonomic scope" value="Bacteria"/>
</dbReference>
<dbReference type="HOGENOM" id="CLU_019563_1_1_12"/>
<dbReference type="OrthoDB" id="9811121at2"/>
<dbReference type="UniPathway" id="UPA00666"/>
<dbReference type="Proteomes" id="UP000008212">
    <property type="component" value="Chromosome"/>
</dbReference>
<dbReference type="GO" id="GO:0005886">
    <property type="term" value="C:plasma membrane"/>
    <property type="evidence" value="ECO:0007669"/>
    <property type="project" value="UniProtKB-SubCell"/>
</dbReference>
<dbReference type="GO" id="GO:0016410">
    <property type="term" value="F:N-acyltransferase activity"/>
    <property type="evidence" value="ECO:0007669"/>
    <property type="project" value="UniProtKB-UniRule"/>
</dbReference>
<dbReference type="GO" id="GO:0042158">
    <property type="term" value="P:lipoprotein biosynthetic process"/>
    <property type="evidence" value="ECO:0007669"/>
    <property type="project" value="UniProtKB-UniRule"/>
</dbReference>
<dbReference type="CDD" id="cd07571">
    <property type="entry name" value="ALP_N-acyl_transferase"/>
    <property type="match status" value="1"/>
</dbReference>
<dbReference type="Gene3D" id="3.60.110.10">
    <property type="entry name" value="Carbon-nitrogen hydrolase"/>
    <property type="match status" value="1"/>
</dbReference>
<dbReference type="HAMAP" id="MF_01148">
    <property type="entry name" value="Lnt"/>
    <property type="match status" value="1"/>
</dbReference>
<dbReference type="InterPro" id="IPR004563">
    <property type="entry name" value="Apolipo_AcylTrfase"/>
</dbReference>
<dbReference type="InterPro" id="IPR003010">
    <property type="entry name" value="C-N_Hydrolase"/>
</dbReference>
<dbReference type="InterPro" id="IPR036526">
    <property type="entry name" value="C-N_Hydrolase_sf"/>
</dbReference>
<dbReference type="InterPro" id="IPR045378">
    <property type="entry name" value="LNT_N"/>
</dbReference>
<dbReference type="NCBIfam" id="TIGR00546">
    <property type="entry name" value="lnt"/>
    <property type="match status" value="1"/>
</dbReference>
<dbReference type="PANTHER" id="PTHR38686">
    <property type="entry name" value="APOLIPOPROTEIN N-ACYLTRANSFERASE"/>
    <property type="match status" value="1"/>
</dbReference>
<dbReference type="PANTHER" id="PTHR38686:SF1">
    <property type="entry name" value="APOLIPOPROTEIN N-ACYLTRANSFERASE"/>
    <property type="match status" value="1"/>
</dbReference>
<dbReference type="Pfam" id="PF00795">
    <property type="entry name" value="CN_hydrolase"/>
    <property type="match status" value="1"/>
</dbReference>
<dbReference type="Pfam" id="PF20154">
    <property type="entry name" value="LNT_N"/>
    <property type="match status" value="1"/>
</dbReference>
<dbReference type="SUPFAM" id="SSF56317">
    <property type="entry name" value="Carbon-nitrogen hydrolase"/>
    <property type="match status" value="1"/>
</dbReference>
<dbReference type="PROSITE" id="PS50263">
    <property type="entry name" value="CN_HYDROLASE"/>
    <property type="match status" value="1"/>
</dbReference>
<name>LNT1_TREDE</name>
<evidence type="ECO:0000255" key="1">
    <source>
        <dbReference type="HAMAP-Rule" id="MF_01148"/>
    </source>
</evidence>
<reference key="1">
    <citation type="journal article" date="2004" name="Proc. Natl. Acad. Sci. U.S.A.">
        <title>Comparison of the genome of the oral pathogen Treponema denticola with other spirochete genomes.</title>
        <authorList>
            <person name="Seshadri R."/>
            <person name="Myers G.S.A."/>
            <person name="Tettelin H."/>
            <person name="Eisen J.A."/>
            <person name="Heidelberg J.F."/>
            <person name="Dodson R.J."/>
            <person name="Davidsen T.M."/>
            <person name="DeBoy R.T."/>
            <person name="Fouts D.E."/>
            <person name="Haft D.H."/>
            <person name="Selengut J."/>
            <person name="Ren Q."/>
            <person name="Brinkac L.M."/>
            <person name="Madupu R."/>
            <person name="Kolonay J.F."/>
            <person name="Durkin S.A."/>
            <person name="Daugherty S.C."/>
            <person name="Shetty J."/>
            <person name="Shvartsbeyn A."/>
            <person name="Gebregeorgis E."/>
            <person name="Geer K."/>
            <person name="Tsegaye G."/>
            <person name="Malek J.A."/>
            <person name="Ayodeji B."/>
            <person name="Shatsman S."/>
            <person name="McLeod M.P."/>
            <person name="Smajs D."/>
            <person name="Howell J.K."/>
            <person name="Pal S."/>
            <person name="Amin A."/>
            <person name="Vashisth P."/>
            <person name="McNeill T.Z."/>
            <person name="Xiang Q."/>
            <person name="Sodergren E."/>
            <person name="Baca E."/>
            <person name="Weinstock G.M."/>
            <person name="Norris S.J."/>
            <person name="Fraser C.M."/>
            <person name="Paulsen I.T."/>
        </authorList>
    </citation>
    <scope>NUCLEOTIDE SEQUENCE [LARGE SCALE GENOMIC DNA]</scope>
    <source>
        <strain>ATCC 35405 / DSM 14222 / CIP 103919 / JCM 8153 / KCTC 15104</strain>
    </source>
</reference>
<comment type="function">
    <text evidence="1">Catalyzes the phospholipid dependent N-acylation of the N-terminal cysteine of apolipoprotein, the last step in lipoprotein maturation.</text>
</comment>
<comment type="catalytic activity">
    <reaction evidence="1">
        <text>N-terminal S-1,2-diacyl-sn-glyceryl-L-cysteinyl-[lipoprotein] + a glycerophospholipid = N-acyl-S-1,2-diacyl-sn-glyceryl-L-cysteinyl-[lipoprotein] + a 2-acyl-sn-glycero-3-phospholipid + H(+)</text>
        <dbReference type="Rhea" id="RHEA:48228"/>
        <dbReference type="Rhea" id="RHEA-COMP:14681"/>
        <dbReference type="Rhea" id="RHEA-COMP:14684"/>
        <dbReference type="ChEBI" id="CHEBI:15378"/>
        <dbReference type="ChEBI" id="CHEBI:136912"/>
        <dbReference type="ChEBI" id="CHEBI:140656"/>
        <dbReference type="ChEBI" id="CHEBI:140657"/>
        <dbReference type="ChEBI" id="CHEBI:140660"/>
        <dbReference type="EC" id="2.3.1.269"/>
    </reaction>
</comment>
<comment type="pathway">
    <text evidence="1">Protein modification; lipoprotein biosynthesis (N-acyl transfer).</text>
</comment>
<comment type="subcellular location">
    <subcellularLocation>
        <location evidence="1">Cell inner membrane</location>
        <topology evidence="1">Multi-pass membrane protein</topology>
    </subcellularLocation>
</comment>
<comment type="similarity">
    <text evidence="1">Belongs to the CN hydrolase family. Apolipoprotein N-acyltransferase subfamily.</text>
</comment>
<keyword id="KW-0012">Acyltransferase</keyword>
<keyword id="KW-0997">Cell inner membrane</keyword>
<keyword id="KW-1003">Cell membrane</keyword>
<keyword id="KW-0472">Membrane</keyword>
<keyword id="KW-1185">Reference proteome</keyword>
<keyword id="KW-0808">Transferase</keyword>
<keyword id="KW-0812">Transmembrane</keyword>
<keyword id="KW-1133">Transmembrane helix</keyword>
<gene>
    <name evidence="1" type="primary">lnt1</name>
    <name type="ordered locus">TDE_1708</name>
</gene>
<proteinExistence type="inferred from homology"/>
<accession>P61037</accession>